<accession>O70250</accession>
<protein>
    <recommendedName>
        <fullName>Phosphoglycerate mutase 2</fullName>
        <ecNumber evidence="3">5.4.2.11</ecNumber>
        <ecNumber evidence="3">5.4.2.4</ecNumber>
    </recommendedName>
    <alternativeName>
        <fullName>BPG-dependent PGAM 2</fullName>
    </alternativeName>
    <alternativeName>
        <fullName>Muscle-specific phosphoglycerate mutase</fullName>
    </alternativeName>
    <alternativeName>
        <fullName>Phosphoglycerate mutase isozyme M</fullName>
        <shortName>PGAM-M</shortName>
    </alternativeName>
</protein>
<feature type="chain" id="PRO_0000179830" description="Phosphoglycerate mutase 2">
    <location>
        <begin position="1"/>
        <end position="253"/>
    </location>
</feature>
<feature type="active site" description="Tele-phosphohistidine intermediate" evidence="3">
    <location>
        <position position="11"/>
    </location>
</feature>
<feature type="active site" description="Proton donor/acceptor" evidence="3">
    <location>
        <position position="89"/>
    </location>
</feature>
<feature type="binding site" evidence="1">
    <location>
        <begin position="10"/>
        <end position="17"/>
    </location>
    <ligand>
        <name>substrate</name>
    </ligand>
</feature>
<feature type="binding site" evidence="1">
    <location>
        <begin position="23"/>
        <end position="24"/>
    </location>
    <ligand>
        <name>substrate</name>
    </ligand>
</feature>
<feature type="binding site" evidence="1">
    <location>
        <position position="62"/>
    </location>
    <ligand>
        <name>substrate</name>
    </ligand>
</feature>
<feature type="binding site" evidence="1">
    <location>
        <begin position="89"/>
        <end position="92"/>
    </location>
    <ligand>
        <name>substrate</name>
    </ligand>
</feature>
<feature type="binding site" evidence="1">
    <location>
        <position position="100"/>
    </location>
    <ligand>
        <name>substrate</name>
    </ligand>
</feature>
<feature type="binding site" evidence="1">
    <location>
        <begin position="116"/>
        <end position="117"/>
    </location>
    <ligand>
        <name>substrate</name>
    </ligand>
</feature>
<feature type="binding site" evidence="1">
    <location>
        <begin position="187"/>
        <end position="188"/>
    </location>
    <ligand>
        <name>substrate</name>
    </ligand>
</feature>
<feature type="site" description="Transition state stabilizer" evidence="1">
    <location>
        <position position="186"/>
    </location>
</feature>
<feature type="modified residue" description="Phosphothreonine" evidence="2">
    <location>
        <position position="3"/>
    </location>
</feature>
<feature type="modified residue" description="Phosphoserine" evidence="2">
    <location>
        <position position="14"/>
    </location>
</feature>
<feature type="modified residue" description="Phosphoserine" evidence="7">
    <location>
        <position position="118"/>
    </location>
</feature>
<feature type="modified residue" description="Phosphothreonine" evidence="2">
    <location>
        <position position="121"/>
    </location>
</feature>
<feature type="modified residue" description="Phosphotyrosine" evidence="2">
    <location>
        <position position="132"/>
    </location>
</feature>
<feature type="modified residue" description="Phosphotyrosine" evidence="2">
    <location>
        <position position="133"/>
    </location>
</feature>
<feature type="modified residue" description="Phosphoserine" evidence="2">
    <location>
        <position position="135"/>
    </location>
</feature>
<feature type="modified residue" description="Phosphothreonine" evidence="2">
    <location>
        <position position="152"/>
    </location>
</feature>
<comment type="function">
    <text>Interconversion of 3- and 2-phosphoglycerate with 2,3-bisphosphoglycerate as the primer of the reaction. Can also catalyze the reaction of EC 5.4.2.4 (synthase), but with a reduced activity.</text>
</comment>
<comment type="catalytic activity">
    <reaction evidence="3">
        <text>(2R)-2-phosphoglycerate = (2R)-3-phosphoglycerate</text>
        <dbReference type="Rhea" id="RHEA:15901"/>
        <dbReference type="ChEBI" id="CHEBI:58272"/>
        <dbReference type="ChEBI" id="CHEBI:58289"/>
        <dbReference type="EC" id="5.4.2.11"/>
    </reaction>
</comment>
<comment type="catalytic activity">
    <reaction evidence="3">
        <text>(2R)-3-phospho-glyceroyl phosphate = (2R)-2,3-bisphosphoglycerate + H(+)</text>
        <dbReference type="Rhea" id="RHEA:17765"/>
        <dbReference type="ChEBI" id="CHEBI:15378"/>
        <dbReference type="ChEBI" id="CHEBI:57604"/>
        <dbReference type="ChEBI" id="CHEBI:58248"/>
        <dbReference type="EC" id="5.4.2.4"/>
    </reaction>
</comment>
<comment type="subunit">
    <text evidence="3 4">Homodimer (By similarity). Interacts with ENO1 (PubMed:23446454).</text>
</comment>
<comment type="tissue specificity">
    <text evidence="4 5">Expressed in the testes (at protein level).</text>
</comment>
<comment type="similarity">
    <text evidence="6">Belongs to the phosphoglycerate mutase family. BPG-dependent PGAM subfamily.</text>
</comment>
<name>PGAM2_MOUSE</name>
<organism>
    <name type="scientific">Mus musculus</name>
    <name type="common">Mouse</name>
    <dbReference type="NCBI Taxonomy" id="10090"/>
    <lineage>
        <taxon>Eukaryota</taxon>
        <taxon>Metazoa</taxon>
        <taxon>Chordata</taxon>
        <taxon>Craniata</taxon>
        <taxon>Vertebrata</taxon>
        <taxon>Euteleostomi</taxon>
        <taxon>Mammalia</taxon>
        <taxon>Eutheria</taxon>
        <taxon>Euarchontoglires</taxon>
        <taxon>Glires</taxon>
        <taxon>Rodentia</taxon>
        <taxon>Myomorpha</taxon>
        <taxon>Muroidea</taxon>
        <taxon>Muridae</taxon>
        <taxon>Murinae</taxon>
        <taxon>Mus</taxon>
        <taxon>Mus</taxon>
    </lineage>
</organism>
<evidence type="ECO:0000250" key="1">
    <source>
        <dbReference type="UniProtKB" id="P00950"/>
    </source>
</evidence>
<evidence type="ECO:0000250" key="2">
    <source>
        <dbReference type="UniProtKB" id="P16290"/>
    </source>
</evidence>
<evidence type="ECO:0000250" key="3">
    <source>
        <dbReference type="UniProtKB" id="P18669"/>
    </source>
</evidence>
<evidence type="ECO:0000269" key="4">
    <source>
    </source>
</evidence>
<evidence type="ECO:0000269" key="5">
    <source>
    </source>
</evidence>
<evidence type="ECO:0000305" key="6"/>
<evidence type="ECO:0007744" key="7">
    <source>
    </source>
</evidence>
<gene>
    <name type="primary">Pgam2</name>
</gene>
<sequence length="253" mass="28827">MTTHRLVMVRHGESLWNQENRFCGWFDAELSEKGAEEAKRGATAIKDAKIEFDICYTSVLKRAIRTLWTILDVTDQMWVPVVRTWRLNERHYGGLTGLNKAETAAKHGEEQVKIWRRSFDTPPPPMDEKHNYYTSISKDRRYAGLKPEELPTCESLKDTIARALPFWNEEIAPKIKAGQRVLIAAHGNSLRGIVKHLEGMSDQAIMELNLPTGIPIVYELDQNLKPTKPMRFLGDEETVRKAMEAVAAQGKAK</sequence>
<reference key="1">
    <citation type="submission" date="1997-10" db="EMBL/GenBank/DDBJ databases">
        <title>Cloning and expression analysis of a mouse gene coding phosphoglycerate mutase muscle-specific subunit.</title>
        <authorList>
            <person name="Wu G."/>
            <person name="Yu L."/>
            <person name="Tu Q."/>
            <person name="Jiang Y."/>
            <person name="Fan Y."/>
            <person name="Zhao S."/>
        </authorList>
    </citation>
    <scope>NUCLEOTIDE SEQUENCE [MRNA]</scope>
</reference>
<reference key="2">
    <citation type="journal article" date="2001" name="Gene">
        <title>Mouse phosphoglycerate mutase M and B isozymes: cDNA cloning, enzyme activity assay and mapping.</title>
        <authorList>
            <person name="Zhang J."/>
            <person name="Yu L."/>
            <person name="Fu Q."/>
            <person name="Gao J."/>
            <person name="Xie Y."/>
            <person name="Chen J."/>
            <person name="Zhang P."/>
            <person name="Liu Q."/>
            <person name="Zhao S."/>
        </authorList>
    </citation>
    <scope>NUCLEOTIDE SEQUENCE [MRNA]</scope>
</reference>
<reference key="3">
    <citation type="journal article" date="2004" name="Genome Res.">
        <title>The status, quality, and expansion of the NIH full-length cDNA project: the Mammalian Gene Collection (MGC).</title>
        <authorList>
            <consortium name="The MGC Project Team"/>
        </authorList>
    </citation>
    <scope>NUCLEOTIDE SEQUENCE [LARGE SCALE MRNA]</scope>
    <source>
        <tissue>Kidney</tissue>
    </source>
</reference>
<reference key="4">
    <citation type="journal article" date="2010" name="Cell">
        <title>A tissue-specific atlas of mouse protein phosphorylation and expression.</title>
        <authorList>
            <person name="Huttlin E.L."/>
            <person name="Jedrychowski M.P."/>
            <person name="Elias J.E."/>
            <person name="Goswami T."/>
            <person name="Rad R."/>
            <person name="Beausoleil S.A."/>
            <person name="Villen J."/>
            <person name="Haas W."/>
            <person name="Sowa M.E."/>
            <person name="Gygi S.P."/>
        </authorList>
    </citation>
    <scope>PHOSPHORYLATION [LARGE SCALE ANALYSIS] AT SER-118</scope>
    <scope>IDENTIFICATION BY MASS SPECTROMETRY [LARGE SCALE ANALYSIS]</scope>
    <source>
        <tissue>Brown adipose tissue</tissue>
        <tissue>Heart</tissue>
        <tissue>Kidney</tissue>
        <tissue>Lung</tissue>
        <tissue>Testis</tissue>
    </source>
</reference>
<reference key="5">
    <citation type="journal article" date="2013" name="Biol. Reprod.">
        <title>Disruption of a spermatogenic cell-specific mouse enolase 4 (eno4) gene causes sperm structural defects and male infertility.</title>
        <authorList>
            <person name="Nakamura N."/>
            <person name="Dai Q."/>
            <person name="Williams J."/>
            <person name="Goulding E.H."/>
            <person name="Willis W.D."/>
            <person name="Brown P.R."/>
            <person name="Eddy E.M."/>
        </authorList>
    </citation>
    <scope>INTERACTION WITH ENO1</scope>
    <scope>TISSUE SPECIFICITY</scope>
</reference>
<reference key="6">
    <citation type="journal article" date="2022" name="Front. Cell Dev. Biol.">
        <title>TMPRSS12 Functions in Meiosis and Spermiogenesis and Is Required for Male Fertility in Mice.</title>
        <authorList>
            <person name="Zhang J."/>
            <person name="Zhou X."/>
            <person name="Wan D."/>
            <person name="Yu L."/>
            <person name="Chen X."/>
            <person name="Yan T."/>
            <person name="Wu Z."/>
            <person name="Zheng M."/>
            <person name="Zhu F."/>
            <person name="Zhu H."/>
        </authorList>
    </citation>
    <scope>TISSUE SPECIFICITY</scope>
</reference>
<proteinExistence type="evidence at protein level"/>
<dbReference type="EC" id="5.4.2.11" evidence="3"/>
<dbReference type="EC" id="5.4.2.4" evidence="3"/>
<dbReference type="EMBL" id="AF029843">
    <property type="protein sequence ID" value="AAC13263.1"/>
    <property type="molecule type" value="mRNA"/>
</dbReference>
<dbReference type="EMBL" id="AF317587">
    <property type="protein sequence ID" value="AAK06662.1"/>
    <property type="molecule type" value="Genomic_DNA"/>
</dbReference>
<dbReference type="EMBL" id="BC010750">
    <property type="protein sequence ID" value="AAH10750.1"/>
    <property type="molecule type" value="mRNA"/>
</dbReference>
<dbReference type="CCDS" id="CCDS24404.1"/>
<dbReference type="RefSeq" id="NP_061358.1">
    <property type="nucleotide sequence ID" value="NM_018870.3"/>
</dbReference>
<dbReference type="SMR" id="O70250"/>
<dbReference type="BioGRID" id="207767">
    <property type="interactions" value="22"/>
</dbReference>
<dbReference type="FunCoup" id="O70250">
    <property type="interactions" value="1256"/>
</dbReference>
<dbReference type="IntAct" id="O70250">
    <property type="interactions" value="1"/>
</dbReference>
<dbReference type="STRING" id="10090.ENSMUSP00000020768"/>
<dbReference type="GlyGen" id="O70250">
    <property type="glycosylation" value="2 sites, 1 O-linked glycan (2 sites)"/>
</dbReference>
<dbReference type="iPTMnet" id="O70250"/>
<dbReference type="PhosphoSitePlus" id="O70250"/>
<dbReference type="SwissPalm" id="O70250"/>
<dbReference type="CPTAC" id="non-CPTAC-3727"/>
<dbReference type="jPOST" id="O70250"/>
<dbReference type="PaxDb" id="10090-ENSMUSP00000020768"/>
<dbReference type="PeptideAtlas" id="O70250"/>
<dbReference type="ProteomicsDB" id="288103"/>
<dbReference type="Antibodypedia" id="26984">
    <property type="antibodies" value="372 antibodies from 27 providers"/>
</dbReference>
<dbReference type="DNASU" id="56012"/>
<dbReference type="Ensembl" id="ENSMUST00000020768.4">
    <property type="protein sequence ID" value="ENSMUSP00000020768.4"/>
    <property type="gene ID" value="ENSMUSG00000020475.4"/>
</dbReference>
<dbReference type="GeneID" id="56012"/>
<dbReference type="KEGG" id="mmu:56012"/>
<dbReference type="UCSC" id="uc007hxe.2">
    <property type="organism name" value="mouse"/>
</dbReference>
<dbReference type="AGR" id="MGI:1933118"/>
<dbReference type="CTD" id="5224"/>
<dbReference type="MGI" id="MGI:1933118">
    <property type="gene designation" value="Pgam2"/>
</dbReference>
<dbReference type="VEuPathDB" id="HostDB:ENSMUSG00000020475"/>
<dbReference type="eggNOG" id="KOG0235">
    <property type="taxonomic scope" value="Eukaryota"/>
</dbReference>
<dbReference type="GeneTree" id="ENSGT00950000182926"/>
<dbReference type="HOGENOM" id="CLU_033323_1_1_1"/>
<dbReference type="InParanoid" id="O70250"/>
<dbReference type="OMA" id="MDDKHPY"/>
<dbReference type="OrthoDB" id="354304at2759"/>
<dbReference type="PhylomeDB" id="O70250"/>
<dbReference type="TreeFam" id="TF300007"/>
<dbReference type="BRENDA" id="5.4.2.11">
    <property type="organism ID" value="3474"/>
</dbReference>
<dbReference type="Reactome" id="R-MMU-70171">
    <property type="pathway name" value="Glycolysis"/>
</dbReference>
<dbReference type="Reactome" id="R-MMU-70263">
    <property type="pathway name" value="Gluconeogenesis"/>
</dbReference>
<dbReference type="BioGRID-ORCS" id="56012">
    <property type="hits" value="7 hits in 79 CRISPR screens"/>
</dbReference>
<dbReference type="PRO" id="PR:O70250"/>
<dbReference type="Proteomes" id="UP000000589">
    <property type="component" value="Chromosome 11"/>
</dbReference>
<dbReference type="RNAct" id="O70250">
    <property type="molecule type" value="protein"/>
</dbReference>
<dbReference type="Bgee" id="ENSMUSG00000020475">
    <property type="expression patterns" value="Expressed in triceps brachii and 194 other cell types or tissues"/>
</dbReference>
<dbReference type="ExpressionAtlas" id="O70250">
    <property type="expression patterns" value="baseline and differential"/>
</dbReference>
<dbReference type="GO" id="GO:0005829">
    <property type="term" value="C:cytosol"/>
    <property type="evidence" value="ECO:0000314"/>
    <property type="project" value="MGI"/>
</dbReference>
<dbReference type="GO" id="GO:0004082">
    <property type="term" value="F:bisphosphoglycerate mutase activity"/>
    <property type="evidence" value="ECO:0007669"/>
    <property type="project" value="UniProtKB-EC"/>
</dbReference>
<dbReference type="GO" id="GO:0016787">
    <property type="term" value="F:hydrolase activity"/>
    <property type="evidence" value="ECO:0007669"/>
    <property type="project" value="UniProtKB-KW"/>
</dbReference>
<dbReference type="GO" id="GO:0042802">
    <property type="term" value="F:identical protein binding"/>
    <property type="evidence" value="ECO:0007669"/>
    <property type="project" value="Ensembl"/>
</dbReference>
<dbReference type="GO" id="GO:0004619">
    <property type="term" value="F:phosphoglycerate mutase activity"/>
    <property type="evidence" value="ECO:0000314"/>
    <property type="project" value="MGI"/>
</dbReference>
<dbReference type="GO" id="GO:0061621">
    <property type="term" value="P:canonical glycolysis"/>
    <property type="evidence" value="ECO:0000314"/>
    <property type="project" value="MGI"/>
</dbReference>
<dbReference type="GO" id="GO:0006094">
    <property type="term" value="P:gluconeogenesis"/>
    <property type="evidence" value="ECO:0007669"/>
    <property type="project" value="Ensembl"/>
</dbReference>
<dbReference type="GO" id="GO:0006096">
    <property type="term" value="P:glycolytic process"/>
    <property type="evidence" value="ECO:0000314"/>
    <property type="project" value="MGI"/>
</dbReference>
<dbReference type="GO" id="GO:0007219">
    <property type="term" value="P:Notch signaling pathway"/>
    <property type="evidence" value="ECO:0000314"/>
    <property type="project" value="MGI"/>
</dbReference>
<dbReference type="GO" id="GO:0046689">
    <property type="term" value="P:response to mercury ion"/>
    <property type="evidence" value="ECO:0007669"/>
    <property type="project" value="Ensembl"/>
</dbReference>
<dbReference type="GO" id="GO:0007283">
    <property type="term" value="P:spermatogenesis"/>
    <property type="evidence" value="ECO:0007669"/>
    <property type="project" value="Ensembl"/>
</dbReference>
<dbReference type="GO" id="GO:0006941">
    <property type="term" value="P:striated muscle contraction"/>
    <property type="evidence" value="ECO:0007669"/>
    <property type="project" value="Ensembl"/>
</dbReference>
<dbReference type="CDD" id="cd07067">
    <property type="entry name" value="HP_PGM_like"/>
    <property type="match status" value="1"/>
</dbReference>
<dbReference type="FunFam" id="3.40.50.1240:FF:000007">
    <property type="entry name" value="Phosphoglycerate mutase"/>
    <property type="match status" value="1"/>
</dbReference>
<dbReference type="Gene3D" id="3.40.50.1240">
    <property type="entry name" value="Phosphoglycerate mutase-like"/>
    <property type="match status" value="1"/>
</dbReference>
<dbReference type="HAMAP" id="MF_01039">
    <property type="entry name" value="PGAM_GpmA"/>
    <property type="match status" value="1"/>
</dbReference>
<dbReference type="InterPro" id="IPR013078">
    <property type="entry name" value="His_Pase_superF_clade-1"/>
</dbReference>
<dbReference type="InterPro" id="IPR029033">
    <property type="entry name" value="His_PPase_superfam"/>
</dbReference>
<dbReference type="InterPro" id="IPR001345">
    <property type="entry name" value="PG/BPGM_mutase_AS"/>
</dbReference>
<dbReference type="InterPro" id="IPR005952">
    <property type="entry name" value="Phosphogly_mut1"/>
</dbReference>
<dbReference type="NCBIfam" id="TIGR01258">
    <property type="entry name" value="pgm_1"/>
    <property type="match status" value="1"/>
</dbReference>
<dbReference type="NCBIfam" id="NF010713">
    <property type="entry name" value="PRK14115.1"/>
    <property type="match status" value="1"/>
</dbReference>
<dbReference type="PANTHER" id="PTHR11931">
    <property type="entry name" value="PHOSPHOGLYCERATE MUTASE"/>
    <property type="match status" value="1"/>
</dbReference>
<dbReference type="Pfam" id="PF00300">
    <property type="entry name" value="His_Phos_1"/>
    <property type="match status" value="2"/>
</dbReference>
<dbReference type="PIRSF" id="PIRSF000709">
    <property type="entry name" value="6PFK_2-Ptase"/>
    <property type="match status" value="1"/>
</dbReference>
<dbReference type="SMART" id="SM00855">
    <property type="entry name" value="PGAM"/>
    <property type="match status" value="1"/>
</dbReference>
<dbReference type="SUPFAM" id="SSF53254">
    <property type="entry name" value="Phosphoglycerate mutase-like"/>
    <property type="match status" value="1"/>
</dbReference>
<dbReference type="PROSITE" id="PS00175">
    <property type="entry name" value="PG_MUTASE"/>
    <property type="match status" value="1"/>
</dbReference>
<keyword id="KW-0324">Glycolysis</keyword>
<keyword id="KW-0378">Hydrolase</keyword>
<keyword id="KW-0413">Isomerase</keyword>
<keyword id="KW-0597">Phosphoprotein</keyword>
<keyword id="KW-1185">Reference proteome</keyword>